<organism>
    <name type="scientific">Caenorhabditis elegans</name>
    <dbReference type="NCBI Taxonomy" id="6239"/>
    <lineage>
        <taxon>Eukaryota</taxon>
        <taxon>Metazoa</taxon>
        <taxon>Ecdysozoa</taxon>
        <taxon>Nematoda</taxon>
        <taxon>Chromadorea</taxon>
        <taxon>Rhabditida</taxon>
        <taxon>Rhabditina</taxon>
        <taxon>Rhabditomorpha</taxon>
        <taxon>Rhabditoidea</taxon>
        <taxon>Rhabditidae</taxon>
        <taxon>Peloderinae</taxon>
        <taxon>Caenorhabditis</taxon>
    </lineage>
</organism>
<sequence length="397" mass="44542">MQWPLIAALFTQLYHFVIGDDCYCPLCELDKLPDNCTTIHGHIQMGLESTMPPFEIVEYKLENVTKIVGCITIANSGFTSLSLLSNLEIVQYSQTGNSSTCSSYGNIITIAKNSLLRRLYLTSLKKVILSKKAEYGIYLLDNPSLCITEGELEQFMQTEKFHAPHIQICDPTKNYCRLDNFEFFNDKNIPVGCQVLTDSLVLNGTKEINGLEFQSRLNDIEQILGSITVFESEIASLKFPNLWRVYNFQPDLPVIFLQENGNLSEVEFSNLTSIPYFGNYPDVLYAFSNPLLTNLSLDTCENLNSLGPITFEEVSNSICENRTSSVVPNQDKNRTGNSGGLIVDVEVSGTNSTALSSVGKDGPPENNTKDNSVYRVFDFNLNLSFLFYLLIFQKLFI</sequence>
<keyword id="KW-1185">Reference proteome</keyword>
<reference key="1">
    <citation type="journal article" date="1994" name="Nature">
        <title>2.2 Mb of contiguous nucleotide sequence from chromosome III of C. elegans.</title>
        <authorList>
            <person name="Wilson R."/>
            <person name="Ainscough R."/>
            <person name="Anderson K."/>
            <person name="Baynes C."/>
            <person name="Berks M."/>
            <person name="Bonfield J."/>
            <person name="Burton J."/>
            <person name="Connell M."/>
            <person name="Copsey T."/>
            <person name="Cooper J."/>
            <person name="Coulson A."/>
            <person name="Craxton M."/>
            <person name="Dear S."/>
            <person name="Du Z."/>
            <person name="Durbin R."/>
            <person name="Favello A."/>
            <person name="Fraser A."/>
            <person name="Fulton L."/>
            <person name="Gardner A."/>
            <person name="Green P."/>
            <person name="Hawkins T."/>
            <person name="Hillier L."/>
            <person name="Jier M."/>
            <person name="Johnston L."/>
            <person name="Jones M."/>
            <person name="Kershaw J."/>
            <person name="Kirsten J."/>
            <person name="Laisster N."/>
            <person name="Latreille P."/>
            <person name="Lightning J."/>
            <person name="Lloyd C."/>
            <person name="Mortimore B."/>
            <person name="O'Callaghan M."/>
            <person name="Parsons J."/>
            <person name="Percy C."/>
            <person name="Rifken L."/>
            <person name="Roopra A."/>
            <person name="Saunders D."/>
            <person name="Shownkeen R."/>
            <person name="Sims M."/>
            <person name="Smaldon N."/>
            <person name="Smith A."/>
            <person name="Smith M."/>
            <person name="Sonnhammer E."/>
            <person name="Staden R."/>
            <person name="Sulston J."/>
            <person name="Thierry-Mieg J."/>
            <person name="Thomas K."/>
            <person name="Vaudin M."/>
            <person name="Vaughan K."/>
            <person name="Waterston R."/>
            <person name="Watson A."/>
            <person name="Weinstock L."/>
            <person name="Wilkinson-Sproat J."/>
            <person name="Wohldman P."/>
        </authorList>
    </citation>
    <scope>NUCLEOTIDE SEQUENCE [LARGE SCALE GENOMIC DNA]</scope>
    <source>
        <strain>Bristol N2</strain>
    </source>
</reference>
<reference key="2">
    <citation type="journal article" date="1998" name="Science">
        <title>Genome sequence of the nematode C. elegans: a platform for investigating biology.</title>
        <authorList>
            <consortium name="The C. elegans sequencing consortium"/>
        </authorList>
    </citation>
    <scope>NUCLEOTIDE SEQUENCE [LARGE SCALE GENOMIC DNA]</scope>
    <source>
        <strain>Bristol N2</strain>
    </source>
</reference>
<proteinExistence type="predicted"/>
<evidence type="ECO:0000305" key="1"/>
<evidence type="ECO:0000312" key="2">
    <source>
        <dbReference type="WormBase" id="F54G8.1"/>
    </source>
</evidence>
<protein>
    <recommendedName>
        <fullName evidence="1">Protein irld-34</fullName>
    </recommendedName>
</protein>
<accession>Q03599</accession>
<name>IRL34_CAEEL</name>
<feature type="chain" id="PRO_0000065365" description="Protein irld-34" evidence="1">
    <location>
        <begin position="1"/>
        <end position="397"/>
    </location>
</feature>
<dbReference type="EMBL" id="Z19155">
    <property type="protein sequence ID" value="CAA79559.1"/>
    <property type="molecule type" value="Genomic_DNA"/>
</dbReference>
<dbReference type="PIR" id="S28274">
    <property type="entry name" value="S28274"/>
</dbReference>
<dbReference type="RefSeq" id="NP_499029.1">
    <property type="nucleotide sequence ID" value="NM_066628.2"/>
</dbReference>
<dbReference type="SMR" id="Q03599"/>
<dbReference type="FunCoup" id="Q03599">
    <property type="interactions" value="1"/>
</dbReference>
<dbReference type="STRING" id="6239.F54G8.1.1"/>
<dbReference type="PaxDb" id="6239-F54G8.1"/>
<dbReference type="EnsemblMetazoa" id="F54G8.1.1">
    <property type="protein sequence ID" value="F54G8.1.1"/>
    <property type="gene ID" value="WBGene00010074"/>
</dbReference>
<dbReference type="GeneID" id="186261"/>
<dbReference type="KEGG" id="cel:CELE_F54G8.1"/>
<dbReference type="UCSC" id="F54G8.1">
    <property type="organism name" value="c. elegans"/>
</dbReference>
<dbReference type="AGR" id="WB:WBGene00010074"/>
<dbReference type="CTD" id="186261"/>
<dbReference type="WormBase" id="F54G8.1">
    <property type="protein sequence ID" value="CE00203"/>
    <property type="gene ID" value="WBGene00010074"/>
    <property type="gene designation" value="irld-34"/>
</dbReference>
<dbReference type="eggNOG" id="ENOG502TGFG">
    <property type="taxonomic scope" value="Eukaryota"/>
</dbReference>
<dbReference type="GeneTree" id="ENSGT00970000195828"/>
<dbReference type="HOGENOM" id="CLU_724105_0_0_1"/>
<dbReference type="InParanoid" id="Q03599"/>
<dbReference type="OMA" id="NLWRIYN"/>
<dbReference type="OrthoDB" id="5809444at2759"/>
<dbReference type="PhylomeDB" id="Q03599"/>
<dbReference type="PRO" id="PR:Q03599"/>
<dbReference type="Proteomes" id="UP000001940">
    <property type="component" value="Chromosome III"/>
</dbReference>
<dbReference type="Bgee" id="WBGene00010074">
    <property type="expression patterns" value="Expressed in larva"/>
</dbReference>
<dbReference type="Gene3D" id="3.80.20.20">
    <property type="entry name" value="Receptor L-domain"/>
    <property type="match status" value="2"/>
</dbReference>
<dbReference type="InterPro" id="IPR000494">
    <property type="entry name" value="Rcpt_L-dom"/>
</dbReference>
<dbReference type="InterPro" id="IPR036941">
    <property type="entry name" value="Rcpt_L-dom_sf"/>
</dbReference>
<dbReference type="InterPro" id="IPR053079">
    <property type="entry name" value="SPS2_domain"/>
</dbReference>
<dbReference type="PANTHER" id="PTHR21662:SF28">
    <property type="entry name" value="PROTEIN IRLD-34"/>
    <property type="match status" value="1"/>
</dbReference>
<dbReference type="PANTHER" id="PTHR21662">
    <property type="entry name" value="RECEPTOR PROTEIN-TYROSINE KINASE"/>
    <property type="match status" value="1"/>
</dbReference>
<dbReference type="Pfam" id="PF01030">
    <property type="entry name" value="Recep_L_domain"/>
    <property type="match status" value="2"/>
</dbReference>
<dbReference type="SUPFAM" id="SSF52058">
    <property type="entry name" value="L domain-like"/>
    <property type="match status" value="2"/>
</dbReference>
<gene>
    <name evidence="2" type="primary">irld-34</name>
    <name evidence="2" type="ORF">F54G8.1</name>
</gene>